<reference key="1">
    <citation type="journal article" date="2008" name="DNA Res.">
        <title>Comparative genome analysis of Lactobacillus reuteri and Lactobacillus fermentum reveal a genomic island for reuterin and cobalamin production.</title>
        <authorList>
            <person name="Morita H."/>
            <person name="Toh H."/>
            <person name="Fukuda S."/>
            <person name="Horikawa H."/>
            <person name="Oshima K."/>
            <person name="Suzuki T."/>
            <person name="Murakami M."/>
            <person name="Hisamatsu S."/>
            <person name="Kato Y."/>
            <person name="Takizawa T."/>
            <person name="Fukuoka H."/>
            <person name="Yoshimura T."/>
            <person name="Itoh K."/>
            <person name="O'Sullivan D.J."/>
            <person name="McKay L.L."/>
            <person name="Ohno H."/>
            <person name="Kikuchi J."/>
            <person name="Masaoka T."/>
            <person name="Hattori M."/>
        </authorList>
    </citation>
    <scope>NUCLEOTIDE SEQUENCE [LARGE SCALE GENOMIC DNA]</scope>
    <source>
        <strain>JCM 1112</strain>
    </source>
</reference>
<sequence>MSYRKLGRTSSQRKALLRDLTTDLIVNGRITTTEARAKEVRKTADKMITLAKHGDLASRRKAAAFVRNVVADVKEDGDDIRVQSALQNLFEELAPKYADRNGGYTRILKTMPRRGDGAPMVILELVD</sequence>
<comment type="subunit">
    <text evidence="1">Part of the 50S ribosomal subunit. Contacts protein L32.</text>
</comment>
<comment type="similarity">
    <text evidence="1">Belongs to the bacterial ribosomal protein bL17 family.</text>
</comment>
<name>RL17_LIMRJ</name>
<keyword id="KW-0687">Ribonucleoprotein</keyword>
<keyword id="KW-0689">Ribosomal protein</keyword>
<proteinExistence type="inferred from homology"/>
<feature type="chain" id="PRO_1000144440" description="Large ribosomal subunit protein bL17">
    <location>
        <begin position="1"/>
        <end position="127"/>
    </location>
</feature>
<protein>
    <recommendedName>
        <fullName evidence="1">Large ribosomal subunit protein bL17</fullName>
    </recommendedName>
    <alternativeName>
        <fullName evidence="2">50S ribosomal protein L17</fullName>
    </alternativeName>
</protein>
<gene>
    <name evidence="1" type="primary">rplQ</name>
    <name type="ordered locus">LAR_1367</name>
</gene>
<organism>
    <name type="scientific">Limosilactobacillus reuteri subsp. reuteri (strain JCM 1112)</name>
    <name type="common">Lactobacillus reuteri</name>
    <dbReference type="NCBI Taxonomy" id="557433"/>
    <lineage>
        <taxon>Bacteria</taxon>
        <taxon>Bacillati</taxon>
        <taxon>Bacillota</taxon>
        <taxon>Bacilli</taxon>
        <taxon>Lactobacillales</taxon>
        <taxon>Lactobacillaceae</taxon>
        <taxon>Limosilactobacillus</taxon>
    </lineage>
</organism>
<dbReference type="EMBL" id="AP007281">
    <property type="protein sequence ID" value="BAG25883.1"/>
    <property type="molecule type" value="Genomic_DNA"/>
</dbReference>
<dbReference type="RefSeq" id="WP_003664528.1">
    <property type="nucleotide sequence ID" value="NC_010609.1"/>
</dbReference>
<dbReference type="SMR" id="B2G8V1"/>
<dbReference type="GeneID" id="77191452"/>
<dbReference type="KEGG" id="lrf:LAR_1367"/>
<dbReference type="HOGENOM" id="CLU_074407_2_2_9"/>
<dbReference type="GO" id="GO:0022625">
    <property type="term" value="C:cytosolic large ribosomal subunit"/>
    <property type="evidence" value="ECO:0007669"/>
    <property type="project" value="TreeGrafter"/>
</dbReference>
<dbReference type="GO" id="GO:0003735">
    <property type="term" value="F:structural constituent of ribosome"/>
    <property type="evidence" value="ECO:0007669"/>
    <property type="project" value="InterPro"/>
</dbReference>
<dbReference type="GO" id="GO:0006412">
    <property type="term" value="P:translation"/>
    <property type="evidence" value="ECO:0007669"/>
    <property type="project" value="UniProtKB-UniRule"/>
</dbReference>
<dbReference type="FunFam" id="3.90.1030.10:FF:000002">
    <property type="entry name" value="50S ribosomal protein L17"/>
    <property type="match status" value="1"/>
</dbReference>
<dbReference type="Gene3D" id="3.90.1030.10">
    <property type="entry name" value="Ribosomal protein L17"/>
    <property type="match status" value="1"/>
</dbReference>
<dbReference type="HAMAP" id="MF_01368">
    <property type="entry name" value="Ribosomal_bL17"/>
    <property type="match status" value="1"/>
</dbReference>
<dbReference type="InterPro" id="IPR000456">
    <property type="entry name" value="Ribosomal_bL17"/>
</dbReference>
<dbReference type="InterPro" id="IPR047859">
    <property type="entry name" value="Ribosomal_bL17_CS"/>
</dbReference>
<dbReference type="InterPro" id="IPR036373">
    <property type="entry name" value="Ribosomal_bL17_sf"/>
</dbReference>
<dbReference type="NCBIfam" id="TIGR00059">
    <property type="entry name" value="L17"/>
    <property type="match status" value="1"/>
</dbReference>
<dbReference type="PANTHER" id="PTHR14413:SF16">
    <property type="entry name" value="LARGE RIBOSOMAL SUBUNIT PROTEIN BL17M"/>
    <property type="match status" value="1"/>
</dbReference>
<dbReference type="PANTHER" id="PTHR14413">
    <property type="entry name" value="RIBOSOMAL PROTEIN L17"/>
    <property type="match status" value="1"/>
</dbReference>
<dbReference type="Pfam" id="PF01196">
    <property type="entry name" value="Ribosomal_L17"/>
    <property type="match status" value="1"/>
</dbReference>
<dbReference type="SUPFAM" id="SSF64263">
    <property type="entry name" value="Prokaryotic ribosomal protein L17"/>
    <property type="match status" value="1"/>
</dbReference>
<dbReference type="PROSITE" id="PS01167">
    <property type="entry name" value="RIBOSOMAL_L17"/>
    <property type="match status" value="1"/>
</dbReference>
<accession>B2G8V1</accession>
<evidence type="ECO:0000255" key="1">
    <source>
        <dbReference type="HAMAP-Rule" id="MF_01368"/>
    </source>
</evidence>
<evidence type="ECO:0000305" key="2"/>